<protein>
    <recommendedName>
        <fullName evidence="1">Large ribosomal subunit protein uL3</fullName>
    </recommendedName>
    <alternativeName>
        <fullName evidence="3">50S ribosomal protein L3</fullName>
    </alternativeName>
</protein>
<proteinExistence type="inferred from homology"/>
<gene>
    <name evidence="1" type="primary">rplC</name>
    <name type="ordered locus">Tbd_0405</name>
</gene>
<accession>Q3SLP9</accession>
<comment type="function">
    <text evidence="1">One of the primary rRNA binding proteins, it binds directly near the 3'-end of the 23S rRNA, where it nucleates assembly of the 50S subunit.</text>
</comment>
<comment type="subunit">
    <text evidence="1">Part of the 50S ribosomal subunit. Forms a cluster with proteins L14 and L19.</text>
</comment>
<comment type="PTM">
    <text evidence="1">Methylated by PrmB.</text>
</comment>
<comment type="similarity">
    <text evidence="1">Belongs to the universal ribosomal protein uL3 family.</text>
</comment>
<name>RL3_THIDA</name>
<evidence type="ECO:0000255" key="1">
    <source>
        <dbReference type="HAMAP-Rule" id="MF_01325"/>
    </source>
</evidence>
<evidence type="ECO:0000256" key="2">
    <source>
        <dbReference type="SAM" id="MobiDB-lite"/>
    </source>
</evidence>
<evidence type="ECO:0000305" key="3"/>
<sequence length="214" mass="22465">MSIGLVGRKVGMTRIFTENGASVPVTVLEMSNNRVTQVRTPENDGYSAVQVAYGSRRNSRVNKSEAGHYAKAGVDAGELLREFRVAADVAAQYQPGAAVSVEVFQAGQKVDVTGVTQGKGFAGTIKRHNFKSQRASHGNSRSHNVPGSIGMAQDPGRVFPGKRMSGHMGAVSCTKQNLEVVRVDAERGLVLLKGAVPGSKGGHVVVRPAVKGGA</sequence>
<feature type="chain" id="PRO_0000241429" description="Large ribosomal subunit protein uL3">
    <location>
        <begin position="1"/>
        <end position="214"/>
    </location>
</feature>
<feature type="region of interest" description="Disordered" evidence="2">
    <location>
        <begin position="131"/>
        <end position="153"/>
    </location>
</feature>
<feature type="compositionally biased region" description="Polar residues" evidence="2">
    <location>
        <begin position="132"/>
        <end position="145"/>
    </location>
</feature>
<feature type="modified residue" description="N5-methylglutamine" evidence="1">
    <location>
        <position position="153"/>
    </location>
</feature>
<keyword id="KW-0488">Methylation</keyword>
<keyword id="KW-1185">Reference proteome</keyword>
<keyword id="KW-0687">Ribonucleoprotein</keyword>
<keyword id="KW-0689">Ribosomal protein</keyword>
<keyword id="KW-0694">RNA-binding</keyword>
<keyword id="KW-0699">rRNA-binding</keyword>
<organism>
    <name type="scientific">Thiobacillus denitrificans (strain ATCC 25259 / T1)</name>
    <dbReference type="NCBI Taxonomy" id="292415"/>
    <lineage>
        <taxon>Bacteria</taxon>
        <taxon>Pseudomonadati</taxon>
        <taxon>Pseudomonadota</taxon>
        <taxon>Betaproteobacteria</taxon>
        <taxon>Nitrosomonadales</taxon>
        <taxon>Thiobacillaceae</taxon>
        <taxon>Thiobacillus</taxon>
    </lineage>
</organism>
<reference key="1">
    <citation type="journal article" date="2006" name="J. Bacteriol.">
        <title>The genome sequence of the obligately chemolithoautotrophic, facultatively anaerobic bacterium Thiobacillus denitrificans.</title>
        <authorList>
            <person name="Beller H.R."/>
            <person name="Chain P.S."/>
            <person name="Letain T.E."/>
            <person name="Chakicherla A."/>
            <person name="Larimer F.W."/>
            <person name="Richardson P.M."/>
            <person name="Coleman M.A."/>
            <person name="Wood A.P."/>
            <person name="Kelly D.P."/>
        </authorList>
    </citation>
    <scope>NUCLEOTIDE SEQUENCE [LARGE SCALE GENOMIC DNA]</scope>
    <source>
        <strain>ATCC 25259 / T1</strain>
    </source>
</reference>
<dbReference type="EMBL" id="CP000116">
    <property type="protein sequence ID" value="AAZ96358.1"/>
    <property type="molecule type" value="Genomic_DNA"/>
</dbReference>
<dbReference type="RefSeq" id="WP_011310917.1">
    <property type="nucleotide sequence ID" value="NC_007404.1"/>
</dbReference>
<dbReference type="SMR" id="Q3SLP9"/>
<dbReference type="STRING" id="292415.Tbd_0405"/>
<dbReference type="KEGG" id="tbd:Tbd_0405"/>
<dbReference type="eggNOG" id="COG0087">
    <property type="taxonomic scope" value="Bacteria"/>
</dbReference>
<dbReference type="HOGENOM" id="CLU_044142_4_1_4"/>
<dbReference type="OrthoDB" id="9806135at2"/>
<dbReference type="Proteomes" id="UP000008291">
    <property type="component" value="Chromosome"/>
</dbReference>
<dbReference type="GO" id="GO:0022625">
    <property type="term" value="C:cytosolic large ribosomal subunit"/>
    <property type="evidence" value="ECO:0007669"/>
    <property type="project" value="TreeGrafter"/>
</dbReference>
<dbReference type="GO" id="GO:0019843">
    <property type="term" value="F:rRNA binding"/>
    <property type="evidence" value="ECO:0007669"/>
    <property type="project" value="UniProtKB-UniRule"/>
</dbReference>
<dbReference type="GO" id="GO:0003735">
    <property type="term" value="F:structural constituent of ribosome"/>
    <property type="evidence" value="ECO:0007669"/>
    <property type="project" value="InterPro"/>
</dbReference>
<dbReference type="GO" id="GO:0006412">
    <property type="term" value="P:translation"/>
    <property type="evidence" value="ECO:0007669"/>
    <property type="project" value="UniProtKB-UniRule"/>
</dbReference>
<dbReference type="FunFam" id="2.40.30.10:FF:000004">
    <property type="entry name" value="50S ribosomal protein L3"/>
    <property type="match status" value="1"/>
</dbReference>
<dbReference type="FunFam" id="3.30.160.810:FF:000001">
    <property type="entry name" value="50S ribosomal protein L3"/>
    <property type="match status" value="1"/>
</dbReference>
<dbReference type="Gene3D" id="3.30.160.810">
    <property type="match status" value="1"/>
</dbReference>
<dbReference type="Gene3D" id="2.40.30.10">
    <property type="entry name" value="Translation factors"/>
    <property type="match status" value="1"/>
</dbReference>
<dbReference type="HAMAP" id="MF_01325_B">
    <property type="entry name" value="Ribosomal_uL3_B"/>
    <property type="match status" value="1"/>
</dbReference>
<dbReference type="InterPro" id="IPR000597">
    <property type="entry name" value="Ribosomal_uL3"/>
</dbReference>
<dbReference type="InterPro" id="IPR019927">
    <property type="entry name" value="Ribosomal_uL3_bac/org-type"/>
</dbReference>
<dbReference type="InterPro" id="IPR019926">
    <property type="entry name" value="Ribosomal_uL3_CS"/>
</dbReference>
<dbReference type="InterPro" id="IPR009000">
    <property type="entry name" value="Transl_B-barrel_sf"/>
</dbReference>
<dbReference type="NCBIfam" id="TIGR03625">
    <property type="entry name" value="L3_bact"/>
    <property type="match status" value="1"/>
</dbReference>
<dbReference type="PANTHER" id="PTHR11229">
    <property type="entry name" value="50S RIBOSOMAL PROTEIN L3"/>
    <property type="match status" value="1"/>
</dbReference>
<dbReference type="PANTHER" id="PTHR11229:SF16">
    <property type="entry name" value="LARGE RIBOSOMAL SUBUNIT PROTEIN UL3C"/>
    <property type="match status" value="1"/>
</dbReference>
<dbReference type="Pfam" id="PF00297">
    <property type="entry name" value="Ribosomal_L3"/>
    <property type="match status" value="1"/>
</dbReference>
<dbReference type="SUPFAM" id="SSF50447">
    <property type="entry name" value="Translation proteins"/>
    <property type="match status" value="1"/>
</dbReference>
<dbReference type="PROSITE" id="PS00474">
    <property type="entry name" value="RIBOSOMAL_L3"/>
    <property type="match status" value="1"/>
</dbReference>